<gene>
    <name evidence="1" type="primary">L1</name>
</gene>
<organismHost>
    <name type="scientific">Pantherophis guttatus</name>
    <name type="common">Corn snake</name>
    <name type="synonym">Elaphe guttata</name>
    <dbReference type="NCBI Taxonomy" id="94885"/>
</organismHost>
<proteinExistence type="inferred from homology"/>
<sequence length="322" mass="36790">MHPILKNIRSQPDQGRAEEHNPELHCGIAGTGGLEEQLRSKQREDRFHKACPPAVDLNRDDTQLYGEGERDLRLKSSACVQLDRTPVTPEDFVPDDMGSRAIRQMEAAKLVRNGQHTRDVERWQHDTYCSHLTQLLVRPLTSLGVMYLADFLNTFVELPPNHTLTMQLVTIINHTSEPTLRRLLKDIGEKDAEGHLKNEWLLQLLSIIEMIFKDEPSERARLTALLTVTNEVALNFSKKASGGNYPTTDRLSKTLTYFRRMIVALLALAESLGCYTNNYCARKPEKRCRTQVEPSDESYMFSLKGALEAPESDEEEEEWIRD</sequence>
<keyword id="KW-1048">Host nucleus</keyword>
<keyword id="KW-0426">Late protein</keyword>
<keyword id="KW-0597">Phosphoprotein</keyword>
<keyword id="KW-1185">Reference proteome</keyword>
<keyword id="KW-0231">Viral genome packaging</keyword>
<keyword id="KW-1188">Viral release from host cell</keyword>
<dbReference type="EMBL" id="DQ106414">
    <property type="protein sequence ID" value="ABA47238.1"/>
    <property type="molecule type" value="Genomic_DNA"/>
</dbReference>
<dbReference type="RefSeq" id="YP_001552249.1">
    <property type="nucleotide sequence ID" value="NC_009989.1"/>
</dbReference>
<dbReference type="KEGG" id="vg:10973891"/>
<dbReference type="OrthoDB" id="7371at10239"/>
<dbReference type="Proteomes" id="UP000136605">
    <property type="component" value="Genome"/>
</dbReference>
<dbReference type="GO" id="GO:0042025">
    <property type="term" value="C:host cell nucleus"/>
    <property type="evidence" value="ECO:0007669"/>
    <property type="project" value="UniProtKB-SubCell"/>
</dbReference>
<dbReference type="GO" id="GO:0019073">
    <property type="term" value="P:viral DNA genome packaging"/>
    <property type="evidence" value="ECO:0007669"/>
    <property type="project" value="UniProtKB-UniRule"/>
</dbReference>
<dbReference type="GO" id="GO:0019076">
    <property type="term" value="P:viral release from host cell"/>
    <property type="evidence" value="ECO:0007669"/>
    <property type="project" value="UniProtKB-UniRule"/>
</dbReference>
<dbReference type="HAMAP" id="MF_04058">
    <property type="entry name" value="ADV_PKG3"/>
    <property type="match status" value="1"/>
</dbReference>
<dbReference type="InterPro" id="IPR037536">
    <property type="entry name" value="ADV_PKG3"/>
</dbReference>
<dbReference type="InterPro" id="IPR004292">
    <property type="entry name" value="L1-like"/>
</dbReference>
<dbReference type="Pfam" id="PF03052">
    <property type="entry name" value="Adeno_52K"/>
    <property type="match status" value="1"/>
</dbReference>
<accession>A9CB88</accession>
<name>PKG3_ADES1</name>
<comment type="function">
    <text evidence="1">Involved in viral genome packaging through its interaction with packaging proteins 1 and 2. After proteolytic cleavage by adenovirus protease, L1 52/55k protein is removed from the capsid during viral maturation.</text>
</comment>
<comment type="subunit">
    <text evidence="1">Part of the genome packaging complex composed of packaging proteins 1, 2 and 3; this complex specifically binds to the packaging sequence on the left end of viral genomic DNA and performs packaging of the viral genome. Interacts with hexon-linking protein IIIa; this interaction is required to promote correct genome packaging.</text>
</comment>
<comment type="subcellular location">
    <subcellularLocation>
        <location evidence="1">Host nucleus</location>
    </subcellularLocation>
    <text evidence="1">Nuclear protein present in empty capsids and assembly intermediates.</text>
</comment>
<comment type="induction">
    <text evidence="1">Expressed in the early phase and late phase of the viral replicative cycle.</text>
</comment>
<comment type="PTM">
    <text evidence="1">Cleaved at different sites by the viral protease during virion maturation.</text>
</comment>
<comment type="miscellaneous">
    <text evidence="1">All late proteins expressed from the major late promoter are produced by alternative splicing and alternative polyadenylation of the same gene giving rise to non-overlapping ORFs. A leader sequence is present in the N-terminus of all these mRNAs and is recognized by the viral shutoff protein to provide expression although conventional translation via ribosome scanning from the cap has been shut off in the host cell.</text>
</comment>
<comment type="similarity">
    <text evidence="1">Belongs to the adenoviridae packaging protein 3 family.</text>
</comment>
<organism>
    <name type="scientific">Snake adenovirus serotype 1</name>
    <name type="common">SnAdV-1</name>
    <dbReference type="NCBI Taxonomy" id="189830"/>
    <lineage>
        <taxon>Viruses</taxon>
        <taxon>Varidnaviria</taxon>
        <taxon>Bamfordvirae</taxon>
        <taxon>Preplasmiviricota</taxon>
        <taxon>Tectiliviricetes</taxon>
        <taxon>Rowavirales</taxon>
        <taxon>Adenoviridae</taxon>
        <taxon>Atadenovirus</taxon>
        <taxon>Snake atadenovirus A</taxon>
    </lineage>
</organism>
<evidence type="ECO:0000255" key="1">
    <source>
        <dbReference type="HAMAP-Rule" id="MF_04058"/>
    </source>
</evidence>
<evidence type="ECO:0000256" key="2">
    <source>
        <dbReference type="SAM" id="MobiDB-lite"/>
    </source>
</evidence>
<protein>
    <recommendedName>
        <fullName evidence="1">Packaging protein 3</fullName>
    </recommendedName>
    <alternativeName>
        <fullName evidence="1">L1-52/55 kDa protein</fullName>
    </alternativeName>
    <alternativeName>
        <fullName evidence="1">Packaging protein 52K</fullName>
    </alternativeName>
</protein>
<feature type="chain" id="PRO_0000425921" description="Packaging protein 3">
    <location>
        <begin position="1"/>
        <end position="322"/>
    </location>
</feature>
<feature type="region of interest" description="Interaction with packaging protein 1" evidence="1">
    <location>
        <begin position="1"/>
        <end position="127"/>
    </location>
</feature>
<feature type="region of interest" description="Disordered" evidence="2">
    <location>
        <begin position="1"/>
        <end position="24"/>
    </location>
</feature>
<reference key="1">
    <citation type="journal article" date="2002" name="J. Gen. Virol.">
        <title>Genetic analysis of an adenovirus isolated from corn snake (Elaphe guttata) implies common origin with the members of the proposed new genus Atadenovirus.</title>
        <authorList>
            <person name="Farkas S.L."/>
            <person name="Benko M."/>
            <person name="Elo P.T."/>
            <person name="Ursu K."/>
            <person name="Dan A."/>
            <person name="Ahne W."/>
            <person name="Harrach B."/>
        </authorList>
    </citation>
    <scope>NUCLEOTIDE SEQUENCE [GENOMIC DNA]</scope>
</reference>